<sequence>MFNYSGLNEECGVFGIWNHPEAAQLTYMGLHSLQHRGQEGAGIVVSDQNELKGERGLGLLTEAINDDQMERLKGYQHAIGHVRYATSGNKGIENIQPFLYHFYDMSVGICHNGNLINAKSLRQNLEKQGAIFHSSSDTEVIMHLIRRSKAPTFEEALKESLRKVKGGFTFAILTKDALYGAVDPNAIRPLVVGKMKDGTYILASETCAIDVLGAEFVQDIHAGEYVVINDKGITVKSYTHHTTTAISAMEYIYFARPDSTIAGKNVHAVRKASGKKLAQESPVNADMVIGVPNSSLSAASGYAEEIGLPYEMGLVKNQYVARTFIQPTQELREQGVRVKLSAVKDIVDGKNIILVDDSIVRGTTIRRIVKMLKDSGANKVHVRIASPEFMFPSFYGIDVSTTAELISASKSPEEIKDYIGADSLAYLSVDGLIESIGLDYDAPYSGLCVESFTGDYPAGLYDYEANYKAHLSHRQKQYISKNKHFFDSEGNLNV</sequence>
<keyword id="KW-0315">Glutamine amidotransferase</keyword>
<keyword id="KW-0328">Glycosyltransferase</keyword>
<keyword id="KW-0460">Magnesium</keyword>
<keyword id="KW-0479">Metal-binding</keyword>
<keyword id="KW-0658">Purine biosynthesis</keyword>
<keyword id="KW-0808">Transferase</keyword>
<gene>
    <name evidence="2" type="primary">purF</name>
    <name type="ordered locus">SAV1070</name>
</gene>
<name>PUR1_STAAM</name>
<accession>P65831</accession>
<accession>Q99V27</accession>
<proteinExistence type="inferred from homology"/>
<reference key="1">
    <citation type="journal article" date="2001" name="Lancet">
        <title>Whole genome sequencing of meticillin-resistant Staphylococcus aureus.</title>
        <authorList>
            <person name="Kuroda M."/>
            <person name="Ohta T."/>
            <person name="Uchiyama I."/>
            <person name="Baba T."/>
            <person name="Yuzawa H."/>
            <person name="Kobayashi I."/>
            <person name="Cui L."/>
            <person name="Oguchi A."/>
            <person name="Aoki K."/>
            <person name="Nagai Y."/>
            <person name="Lian J.-Q."/>
            <person name="Ito T."/>
            <person name="Kanamori M."/>
            <person name="Matsumaru H."/>
            <person name="Maruyama A."/>
            <person name="Murakami H."/>
            <person name="Hosoyama A."/>
            <person name="Mizutani-Ui Y."/>
            <person name="Takahashi N.K."/>
            <person name="Sawano T."/>
            <person name="Inoue R."/>
            <person name="Kaito C."/>
            <person name="Sekimizu K."/>
            <person name="Hirakawa H."/>
            <person name="Kuhara S."/>
            <person name="Goto S."/>
            <person name="Yabuzaki J."/>
            <person name="Kanehisa M."/>
            <person name="Yamashita A."/>
            <person name="Oshima K."/>
            <person name="Furuya K."/>
            <person name="Yoshino C."/>
            <person name="Shiba T."/>
            <person name="Hattori M."/>
            <person name="Ogasawara N."/>
            <person name="Hayashi H."/>
            <person name="Hiramatsu K."/>
        </authorList>
    </citation>
    <scope>NUCLEOTIDE SEQUENCE [LARGE SCALE GENOMIC DNA]</scope>
    <source>
        <strain>Mu50 / ATCC 700699</strain>
    </source>
</reference>
<dbReference type="EC" id="2.4.2.14" evidence="2"/>
<dbReference type="EMBL" id="BA000017">
    <property type="protein sequence ID" value="BAB57232.1"/>
    <property type="molecule type" value="Genomic_DNA"/>
</dbReference>
<dbReference type="RefSeq" id="WP_000483720.1">
    <property type="nucleotide sequence ID" value="NC_002758.2"/>
</dbReference>
<dbReference type="SMR" id="P65831"/>
<dbReference type="MEROPS" id="C44.001"/>
<dbReference type="KEGG" id="sav:SAV1070"/>
<dbReference type="HOGENOM" id="CLU_022389_3_1_9"/>
<dbReference type="PhylomeDB" id="P65831"/>
<dbReference type="UniPathway" id="UPA00074">
    <property type="reaction ID" value="UER00124"/>
</dbReference>
<dbReference type="Proteomes" id="UP000002481">
    <property type="component" value="Chromosome"/>
</dbReference>
<dbReference type="GO" id="GO:0004044">
    <property type="term" value="F:amidophosphoribosyltransferase activity"/>
    <property type="evidence" value="ECO:0007669"/>
    <property type="project" value="UniProtKB-UniRule"/>
</dbReference>
<dbReference type="GO" id="GO:0000287">
    <property type="term" value="F:magnesium ion binding"/>
    <property type="evidence" value="ECO:0007669"/>
    <property type="project" value="UniProtKB-UniRule"/>
</dbReference>
<dbReference type="GO" id="GO:0006189">
    <property type="term" value="P:'de novo' IMP biosynthetic process"/>
    <property type="evidence" value="ECO:0007669"/>
    <property type="project" value="UniProtKB-UniRule"/>
</dbReference>
<dbReference type="GO" id="GO:0009113">
    <property type="term" value="P:purine nucleobase biosynthetic process"/>
    <property type="evidence" value="ECO:0007669"/>
    <property type="project" value="InterPro"/>
</dbReference>
<dbReference type="CDD" id="cd00715">
    <property type="entry name" value="GPATase_N"/>
    <property type="match status" value="1"/>
</dbReference>
<dbReference type="CDD" id="cd06223">
    <property type="entry name" value="PRTases_typeI"/>
    <property type="match status" value="1"/>
</dbReference>
<dbReference type="Gene3D" id="3.40.50.2020">
    <property type="match status" value="1"/>
</dbReference>
<dbReference type="Gene3D" id="3.60.20.10">
    <property type="entry name" value="Glutamine Phosphoribosylpyrophosphate, subunit 1, domain 1"/>
    <property type="match status" value="1"/>
</dbReference>
<dbReference type="HAMAP" id="MF_01931">
    <property type="entry name" value="PurF"/>
    <property type="match status" value="1"/>
</dbReference>
<dbReference type="InterPro" id="IPR017932">
    <property type="entry name" value="GATase_2_dom"/>
</dbReference>
<dbReference type="InterPro" id="IPR029055">
    <property type="entry name" value="Ntn_hydrolases_N"/>
</dbReference>
<dbReference type="InterPro" id="IPR000836">
    <property type="entry name" value="PRibTrfase_dom"/>
</dbReference>
<dbReference type="InterPro" id="IPR029057">
    <property type="entry name" value="PRTase-like"/>
</dbReference>
<dbReference type="InterPro" id="IPR005854">
    <property type="entry name" value="PurF"/>
</dbReference>
<dbReference type="InterPro" id="IPR035584">
    <property type="entry name" value="PurF_N"/>
</dbReference>
<dbReference type="NCBIfam" id="TIGR01134">
    <property type="entry name" value="purF"/>
    <property type="match status" value="1"/>
</dbReference>
<dbReference type="PANTHER" id="PTHR11907">
    <property type="entry name" value="AMIDOPHOSPHORIBOSYLTRANSFERASE"/>
    <property type="match status" value="1"/>
</dbReference>
<dbReference type="Pfam" id="PF13537">
    <property type="entry name" value="GATase_7"/>
    <property type="match status" value="1"/>
</dbReference>
<dbReference type="Pfam" id="PF00156">
    <property type="entry name" value="Pribosyltran"/>
    <property type="match status" value="1"/>
</dbReference>
<dbReference type="PIRSF" id="PIRSF000485">
    <property type="entry name" value="Amd_phspho_trans"/>
    <property type="match status" value="1"/>
</dbReference>
<dbReference type="SUPFAM" id="SSF56235">
    <property type="entry name" value="N-terminal nucleophile aminohydrolases (Ntn hydrolases)"/>
    <property type="match status" value="1"/>
</dbReference>
<dbReference type="SUPFAM" id="SSF53271">
    <property type="entry name" value="PRTase-like"/>
    <property type="match status" value="1"/>
</dbReference>
<dbReference type="PROSITE" id="PS51278">
    <property type="entry name" value="GATASE_TYPE_2"/>
    <property type="match status" value="1"/>
</dbReference>
<dbReference type="PROSITE" id="PS00103">
    <property type="entry name" value="PUR_PYR_PR_TRANSFER"/>
    <property type="match status" value="1"/>
</dbReference>
<evidence type="ECO:0000250" key="1"/>
<evidence type="ECO:0000255" key="2">
    <source>
        <dbReference type="HAMAP-Rule" id="MF_01931"/>
    </source>
</evidence>
<comment type="function">
    <text evidence="2">Catalyzes the formation of phosphoribosylamine from phosphoribosylpyrophosphate (PRPP) and glutamine.</text>
</comment>
<comment type="catalytic activity">
    <reaction evidence="2">
        <text>5-phospho-beta-D-ribosylamine + L-glutamate + diphosphate = 5-phospho-alpha-D-ribose 1-diphosphate + L-glutamine + H2O</text>
        <dbReference type="Rhea" id="RHEA:14905"/>
        <dbReference type="ChEBI" id="CHEBI:15377"/>
        <dbReference type="ChEBI" id="CHEBI:29985"/>
        <dbReference type="ChEBI" id="CHEBI:33019"/>
        <dbReference type="ChEBI" id="CHEBI:58017"/>
        <dbReference type="ChEBI" id="CHEBI:58359"/>
        <dbReference type="ChEBI" id="CHEBI:58681"/>
        <dbReference type="EC" id="2.4.2.14"/>
    </reaction>
</comment>
<comment type="cofactor">
    <cofactor evidence="2">
        <name>Mg(2+)</name>
        <dbReference type="ChEBI" id="CHEBI:18420"/>
    </cofactor>
    <text evidence="2">Binds 1 Mg(2+) ion per subunit.</text>
</comment>
<comment type="pathway">
    <text evidence="2">Purine metabolism; IMP biosynthesis via de novo pathway; N(1)-(5-phospho-D-ribosyl)glycinamide from 5-phospho-alpha-D-ribose 1-diphosphate: step 1/2.</text>
</comment>
<comment type="similarity">
    <text evidence="2">In the C-terminal section; belongs to the purine/pyrimidine phosphoribosyltransferase family.</text>
</comment>
<feature type="propeptide" id="PRO_0000029263" evidence="1">
    <location>
        <begin position="1"/>
        <end position="10"/>
    </location>
</feature>
<feature type="chain" id="PRO_0000029264" description="Amidophosphoribosyltransferase">
    <location>
        <begin position="11"/>
        <end position="494"/>
    </location>
</feature>
<feature type="domain" description="Glutamine amidotransferase type-2" evidence="2">
    <location>
        <begin position="11"/>
        <end position="231"/>
    </location>
</feature>
<feature type="active site" description="Nucleophile" evidence="2">
    <location>
        <position position="11"/>
    </location>
</feature>
<feature type="binding site" evidence="2">
    <location>
        <position position="294"/>
    </location>
    <ligand>
        <name>Mg(2+)</name>
        <dbReference type="ChEBI" id="CHEBI:18420"/>
    </ligand>
</feature>
<feature type="binding site" evidence="2">
    <location>
        <position position="356"/>
    </location>
    <ligand>
        <name>Mg(2+)</name>
        <dbReference type="ChEBI" id="CHEBI:18420"/>
    </ligand>
</feature>
<feature type="binding site" evidence="2">
    <location>
        <position position="357"/>
    </location>
    <ligand>
        <name>Mg(2+)</name>
        <dbReference type="ChEBI" id="CHEBI:18420"/>
    </ligand>
</feature>
<protein>
    <recommendedName>
        <fullName evidence="2">Amidophosphoribosyltransferase</fullName>
        <shortName evidence="2">ATase</shortName>
        <ecNumber evidence="2">2.4.2.14</ecNumber>
    </recommendedName>
    <alternativeName>
        <fullName evidence="2">Glutamine phosphoribosylpyrophosphate amidotransferase</fullName>
        <shortName evidence="2">GPATase</shortName>
    </alternativeName>
</protein>
<organism>
    <name type="scientific">Staphylococcus aureus (strain Mu50 / ATCC 700699)</name>
    <dbReference type="NCBI Taxonomy" id="158878"/>
    <lineage>
        <taxon>Bacteria</taxon>
        <taxon>Bacillati</taxon>
        <taxon>Bacillota</taxon>
        <taxon>Bacilli</taxon>
        <taxon>Bacillales</taxon>
        <taxon>Staphylococcaceae</taxon>
        <taxon>Staphylococcus</taxon>
    </lineage>
</organism>